<name>BETB_SHIF8</name>
<accession>Q0T7M9</accession>
<gene>
    <name evidence="1" type="primary">betB</name>
    <name type="ordered locus">SFV_0323</name>
</gene>
<dbReference type="EC" id="1.2.1.8" evidence="1"/>
<dbReference type="EMBL" id="CP000266">
    <property type="protein sequence ID" value="ABF02597.1"/>
    <property type="molecule type" value="Genomic_DNA"/>
</dbReference>
<dbReference type="RefSeq" id="WP_000089071.1">
    <property type="nucleotide sequence ID" value="NC_008258.1"/>
</dbReference>
<dbReference type="SMR" id="Q0T7M9"/>
<dbReference type="KEGG" id="sfv:SFV_0323"/>
<dbReference type="HOGENOM" id="CLU_005391_0_0_6"/>
<dbReference type="UniPathway" id="UPA00529">
    <property type="reaction ID" value="UER00386"/>
</dbReference>
<dbReference type="Proteomes" id="UP000000659">
    <property type="component" value="Chromosome"/>
</dbReference>
<dbReference type="GO" id="GO:0008802">
    <property type="term" value="F:betaine-aldehyde dehydrogenase (NAD+) activity"/>
    <property type="evidence" value="ECO:0007669"/>
    <property type="project" value="UniProtKB-UniRule"/>
</dbReference>
<dbReference type="GO" id="GO:0046872">
    <property type="term" value="F:metal ion binding"/>
    <property type="evidence" value="ECO:0007669"/>
    <property type="project" value="UniProtKB-KW"/>
</dbReference>
<dbReference type="GO" id="GO:0019285">
    <property type="term" value="P:glycine betaine biosynthetic process from choline"/>
    <property type="evidence" value="ECO:0007669"/>
    <property type="project" value="UniProtKB-UniRule"/>
</dbReference>
<dbReference type="CDD" id="cd07090">
    <property type="entry name" value="ALDH_F9_TMBADH"/>
    <property type="match status" value="1"/>
</dbReference>
<dbReference type="FunFam" id="3.40.309.10:FF:000014">
    <property type="entry name" value="NAD/NADP-dependent betaine aldehyde dehydrogenase"/>
    <property type="match status" value="1"/>
</dbReference>
<dbReference type="FunFam" id="3.40.605.10:FF:000007">
    <property type="entry name" value="NAD/NADP-dependent betaine aldehyde dehydrogenase"/>
    <property type="match status" value="1"/>
</dbReference>
<dbReference type="Gene3D" id="3.40.605.10">
    <property type="entry name" value="Aldehyde Dehydrogenase, Chain A, domain 1"/>
    <property type="match status" value="1"/>
</dbReference>
<dbReference type="Gene3D" id="3.40.309.10">
    <property type="entry name" value="Aldehyde Dehydrogenase, Chain A, domain 2"/>
    <property type="match status" value="1"/>
</dbReference>
<dbReference type="HAMAP" id="MF_00804">
    <property type="entry name" value="BADH"/>
    <property type="match status" value="1"/>
</dbReference>
<dbReference type="InterPro" id="IPR016161">
    <property type="entry name" value="Ald_DH/histidinol_DH"/>
</dbReference>
<dbReference type="InterPro" id="IPR016163">
    <property type="entry name" value="Ald_DH_C"/>
</dbReference>
<dbReference type="InterPro" id="IPR016160">
    <property type="entry name" value="Ald_DH_CS_CYS"/>
</dbReference>
<dbReference type="InterPro" id="IPR029510">
    <property type="entry name" value="Ald_DH_CS_GLU"/>
</dbReference>
<dbReference type="InterPro" id="IPR016162">
    <property type="entry name" value="Ald_DH_N"/>
</dbReference>
<dbReference type="InterPro" id="IPR015590">
    <property type="entry name" value="Aldehyde_DH_dom"/>
</dbReference>
<dbReference type="InterPro" id="IPR011264">
    <property type="entry name" value="BADH"/>
</dbReference>
<dbReference type="NCBIfam" id="TIGR01804">
    <property type="entry name" value="BADH"/>
    <property type="match status" value="1"/>
</dbReference>
<dbReference type="NCBIfam" id="NF009725">
    <property type="entry name" value="PRK13252.1"/>
    <property type="match status" value="1"/>
</dbReference>
<dbReference type="PANTHER" id="PTHR11699">
    <property type="entry name" value="ALDEHYDE DEHYDROGENASE-RELATED"/>
    <property type="match status" value="1"/>
</dbReference>
<dbReference type="Pfam" id="PF00171">
    <property type="entry name" value="Aldedh"/>
    <property type="match status" value="1"/>
</dbReference>
<dbReference type="SUPFAM" id="SSF53720">
    <property type="entry name" value="ALDH-like"/>
    <property type="match status" value="1"/>
</dbReference>
<dbReference type="PROSITE" id="PS00070">
    <property type="entry name" value="ALDEHYDE_DEHYDR_CYS"/>
    <property type="match status" value="1"/>
</dbReference>
<dbReference type="PROSITE" id="PS00687">
    <property type="entry name" value="ALDEHYDE_DEHYDR_GLU"/>
    <property type="match status" value="1"/>
</dbReference>
<organism>
    <name type="scientific">Shigella flexneri serotype 5b (strain 8401)</name>
    <dbReference type="NCBI Taxonomy" id="373384"/>
    <lineage>
        <taxon>Bacteria</taxon>
        <taxon>Pseudomonadati</taxon>
        <taxon>Pseudomonadota</taxon>
        <taxon>Gammaproteobacteria</taxon>
        <taxon>Enterobacterales</taxon>
        <taxon>Enterobacteriaceae</taxon>
        <taxon>Shigella</taxon>
    </lineage>
</organism>
<evidence type="ECO:0000255" key="1">
    <source>
        <dbReference type="HAMAP-Rule" id="MF_00804"/>
    </source>
</evidence>
<comment type="function">
    <text evidence="1">Involved in the biosynthesis of the osmoprotectant glycine betaine. Catalyzes the irreversible oxidation of betaine aldehyde to the corresponding acid.</text>
</comment>
<comment type="catalytic activity">
    <reaction evidence="1">
        <text>betaine aldehyde + NAD(+) + H2O = glycine betaine + NADH + 2 H(+)</text>
        <dbReference type="Rhea" id="RHEA:15305"/>
        <dbReference type="ChEBI" id="CHEBI:15377"/>
        <dbReference type="ChEBI" id="CHEBI:15378"/>
        <dbReference type="ChEBI" id="CHEBI:15710"/>
        <dbReference type="ChEBI" id="CHEBI:17750"/>
        <dbReference type="ChEBI" id="CHEBI:57540"/>
        <dbReference type="ChEBI" id="CHEBI:57945"/>
        <dbReference type="EC" id="1.2.1.8"/>
    </reaction>
    <physiologicalReaction direction="left-to-right" evidence="1">
        <dbReference type="Rhea" id="RHEA:15306"/>
    </physiologicalReaction>
</comment>
<comment type="cofactor">
    <cofactor evidence="1">
        <name>K(+)</name>
        <dbReference type="ChEBI" id="CHEBI:29103"/>
    </cofactor>
    <text evidence="1">Binds 2 potassium ions per subunit.</text>
</comment>
<comment type="pathway">
    <text evidence="1">Amine and polyamine biosynthesis; betaine biosynthesis via choline pathway; betaine from betaine aldehyde: step 1/1.</text>
</comment>
<comment type="subunit">
    <text evidence="1">Dimer of dimers.</text>
</comment>
<comment type="similarity">
    <text evidence="1">Belongs to the aldehyde dehydrogenase family.</text>
</comment>
<feature type="chain" id="PRO_1000047057" description="Betaine aldehyde dehydrogenase">
    <location>
        <begin position="1"/>
        <end position="490"/>
    </location>
</feature>
<feature type="active site" description="Charge relay system" evidence="1">
    <location>
        <position position="162"/>
    </location>
</feature>
<feature type="active site" description="Proton acceptor" evidence="1">
    <location>
        <position position="252"/>
    </location>
</feature>
<feature type="active site" description="Nucleophile" evidence="1">
    <location>
        <position position="286"/>
    </location>
</feature>
<feature type="active site" description="Charge relay system" evidence="1">
    <location>
        <position position="464"/>
    </location>
</feature>
<feature type="binding site" evidence="1">
    <location>
        <position position="26"/>
    </location>
    <ligand>
        <name>K(+)</name>
        <dbReference type="ChEBI" id="CHEBI:29103"/>
        <label>1</label>
    </ligand>
</feature>
<feature type="binding site" evidence="1">
    <location>
        <position position="27"/>
    </location>
    <ligand>
        <name>K(+)</name>
        <dbReference type="ChEBI" id="CHEBI:29103"/>
        <label>1</label>
    </ligand>
</feature>
<feature type="binding site" evidence="1">
    <location>
        <position position="93"/>
    </location>
    <ligand>
        <name>K(+)</name>
        <dbReference type="ChEBI" id="CHEBI:29103"/>
        <label>1</label>
    </ligand>
</feature>
<feature type="binding site" evidence="1">
    <location>
        <begin position="150"/>
        <end position="152"/>
    </location>
    <ligand>
        <name>NAD(+)</name>
        <dbReference type="ChEBI" id="CHEBI:57540"/>
    </ligand>
</feature>
<feature type="binding site" evidence="1">
    <location>
        <begin position="176"/>
        <end position="179"/>
    </location>
    <ligand>
        <name>NAD(+)</name>
        <dbReference type="ChEBI" id="CHEBI:57540"/>
    </ligand>
</feature>
<feature type="binding site" evidence="1">
    <location>
        <position position="180"/>
    </location>
    <ligand>
        <name>K(+)</name>
        <dbReference type="ChEBI" id="CHEBI:29103"/>
        <label>1</label>
    </ligand>
</feature>
<feature type="binding site" evidence="1">
    <location>
        <begin position="230"/>
        <end position="233"/>
    </location>
    <ligand>
        <name>NAD(+)</name>
        <dbReference type="ChEBI" id="CHEBI:57540"/>
    </ligand>
</feature>
<feature type="binding site" evidence="1">
    <location>
        <position position="246"/>
    </location>
    <ligand>
        <name>K(+)</name>
        <dbReference type="ChEBI" id="CHEBI:29103"/>
        <label>2</label>
    </ligand>
</feature>
<feature type="binding site" evidence="1">
    <location>
        <position position="254"/>
    </location>
    <ligand>
        <name>NAD(+)</name>
        <dbReference type="ChEBI" id="CHEBI:57540"/>
    </ligand>
</feature>
<feature type="binding site" description="covalent" evidence="1">
    <location>
        <position position="286"/>
    </location>
    <ligand>
        <name>NAD(+)</name>
        <dbReference type="ChEBI" id="CHEBI:57540"/>
    </ligand>
</feature>
<feature type="binding site" evidence="1">
    <location>
        <position position="387"/>
    </location>
    <ligand>
        <name>NAD(+)</name>
        <dbReference type="ChEBI" id="CHEBI:57540"/>
    </ligand>
</feature>
<feature type="binding site" evidence="1">
    <location>
        <position position="457"/>
    </location>
    <ligand>
        <name>K(+)</name>
        <dbReference type="ChEBI" id="CHEBI:29103"/>
        <label>2</label>
    </ligand>
</feature>
<feature type="binding site" evidence="1">
    <location>
        <position position="460"/>
    </location>
    <ligand>
        <name>K(+)</name>
        <dbReference type="ChEBI" id="CHEBI:29103"/>
        <label>2</label>
    </ligand>
</feature>
<feature type="site" description="Seems to be a necessary countercharge to the potassium cations" evidence="1">
    <location>
        <position position="248"/>
    </location>
</feature>
<feature type="modified residue" description="Cysteine sulfenic acid (-SOH)" evidence="1">
    <location>
        <position position="286"/>
    </location>
</feature>
<protein>
    <recommendedName>
        <fullName evidence="1">Betaine aldehyde dehydrogenase</fullName>
        <shortName evidence="1">BADH</shortName>
        <ecNumber evidence="1">1.2.1.8</ecNumber>
    </recommendedName>
</protein>
<proteinExistence type="inferred from homology"/>
<reference key="1">
    <citation type="journal article" date="2006" name="BMC Genomics">
        <title>Complete genome sequence of Shigella flexneri 5b and comparison with Shigella flexneri 2a.</title>
        <authorList>
            <person name="Nie H."/>
            <person name="Yang F."/>
            <person name="Zhang X."/>
            <person name="Yang J."/>
            <person name="Chen L."/>
            <person name="Wang J."/>
            <person name="Xiong Z."/>
            <person name="Peng J."/>
            <person name="Sun L."/>
            <person name="Dong J."/>
            <person name="Xue Y."/>
            <person name="Xu X."/>
            <person name="Chen S."/>
            <person name="Yao Z."/>
            <person name="Shen Y."/>
            <person name="Jin Q."/>
        </authorList>
    </citation>
    <scope>NUCLEOTIDE SEQUENCE [LARGE SCALE GENOMIC DNA]</scope>
    <source>
        <strain>8401</strain>
    </source>
</reference>
<sequence>MSRMAEQQLYIHGGYTSATSGRTFETINPANGNVLATVQAAGREDVDRAVKSAQQGQKIWAAMTAMERSRILRRAVDILRERNDELAKLETLDTGKAYSETSTVDIVTGADVLEYYAGLIPALEGSQIPLRETSFVYTRREPLGVVAGIGAWNYPIQIALWKSAPALAAGNAMIFKPSEVTPLTALKLAEIYSEAGLPDGVFNVLPGGGAETGQYLTEHPGIAKVSFTGGVASGKKVMANSAASSLKEVTMELGGKSPLIVFDDADLDLAADIAMMANFFSSGQVCTNGTRVFVPAKCKAAFEQKILARVERIRAGDVFDPQTNFGPLVSFPHRDNVLRYIAKGKEEGARVLCGGDVLKGDGFDNGAWVAPTVFTDCRDEMTIVREEIFGPVMSLLTYESEDEVIRRANDTDYGLAAGIVTADLNRAHRVMHQLEAGICWINTWGESPAEMPVGGYKHSGIGRENGVMTLQSYTQVKSIQVEMAKFQSIF</sequence>
<keyword id="KW-0479">Metal-binding</keyword>
<keyword id="KW-0520">NAD</keyword>
<keyword id="KW-0521">NADP</keyword>
<keyword id="KW-0558">Oxidation</keyword>
<keyword id="KW-0560">Oxidoreductase</keyword>
<keyword id="KW-0630">Potassium</keyword>